<sequence>MEEKQQIILANQDGGTVTGGAPTFFVILKQPGNGKTDQGILVTNRDARALLSRESSPGKSKEKICLPADCTVGKITVTLDNNSMWNEFHNRSTEMILTKQGRRMFPYCRYWITGLDSNLKYILVMDISPVDSHRYKWNGRWWEPSGKAEPHILGRVFIHPESPSTGHYWMHQPVSFYKLKLTNNTLDQEGHIILHSMHRYLPRLHLVPAEKATEVIQLNGPGVHTFTFPQTEFFAVTAYQNIQITQLKIDYNPFAKGFRDDGLSSKPQREGKQRNSSDQEGNSVSSSPAHRVRLTEGEGSEIHSGDFDPVLRGHEASSLSLEKAPHNVKQDFLGFMNTDSTHEVPQLKHEISESRIVNSFEDDSQISSPSNPNGNFNVVIKEEPLDDYDYELGECPEGITVKQEETDEETDVYSNSDDDPILEKQLKRHNKVDNLEADHPSYKWLPNSPGVAKAKMFKLDAGKMPVVYLEPCAVTKSTVKISELPDNMLSTSRKDKSMLAELEYLPAYIENSDGTDFCLSKDSENSLRKHSPDLRIVQKYTLLKEPNWKYPDILDNSSTERIHDSSKGSTAESFSGKEDLGKKRTTMLKMAIPSKTVTASHSASPNTPGKRGRPRKLRLSKAGRPPKNTGKSLTAAKNIPVGPGSTFPDVKPDLEDVDGVLFVSFESKEALDIHAVDGTTEEPSSLQTTTTNDSGCRTRISQLEKELIEDLKSLRHKQVIHPALQEVGLKLNSVDPTVSIDLKYLGVQLPLAPATSFPLWNVTGTNPASPDAGFPFVSRTGKTNDFTKIKGWRGKFQNASASRNEGGNSEASLKNRSAFCSDKLDEYLENEGKLMETNIGFSSNAPTSPVVYQLPTKSTSYVRTLDSVLKKQSTISPSTSHSVKPQSVTTASRKTKAQNKQTTLSGRTKSSYKSILPYPVSPKQKNSHVSQGDKITKNSLSSTSDNQVTNLVVPSVDENAFPKQISLRQAQQQHLQQQGTRPPGLSKSQVKLMDLEDCALWEGKPRTYITEERADVSLTTLLTAQASLKTKPIHTIIRKRAPPCNNDFCRLGCVCSSLALEKRQPAHCRRPDCMFGCTCLKRKVVLVKGGSKTKHFHKKAANRDPLFYDTLGEEGREGGGVREDEEQLKEKKKRKKLEYTVCEAEPEQPVRHYPLWVKVEGEVDPEPVYIPTPSVIEPIKPLVLPQPDLSSTTKGKLTPGIKPARTYTPKPNPVIREEDKDPVYLYFESMMTCARVRVYERKKEEQRQLSPPLSPSSSFQQQSSCYSSPENRVTKELDSEQTLKQLICDLEDDSDKSQEKSWKSSCNEGESSSTSYVHQRSPGGPTKLIEIISDCNWEEDRNKILSILSQHINSNMPQSLKVGSFIIELASQRKCRGEKTPPVYSSRVKISMPSSQDQDDMAEKSGSETPDGPLSPGKMDDISPVQTDALDSVRERLHGGKGLPFYAGLSPSGKLVAYKRKPSSTTSGLIQVASNAKVAASRKPRTLLPSTSNSKMASSGPATNRSGKNLKAFVPAKRPIAARPSPGGVFTQFVMSKVGALQQKIPGVRTPQPLTGPQKFSIRPSPVMVVTPVVSSEQVQVCSTVAAAVTTSPQVFLENVTAVPSLTANSDMGAKEATYSSSASTAGVVEISETNNTTLVTSTQSTATVNLTKTTGITTSPVASVSFAKPLVASPTITLPVASTASTSIVMVTTAASSSVVTTPTSSLSSVPIILSGINGSPPVSQRPENAPQIPVTTPQISSNNVKRTGPRLLHPNGQIVQLLPLHQIRGSNAQPSLQPVVFRNPGSMVGIRLPAPCKSSETPSSSASSSAFSVMSPVIQAVGSSPTVNVISQAPSLLSSGSSFVSQAGTLTLRISPPETQNLASKTGSESKITPSTGGQPVGTASLIPLQSGSFALLQLPGQKPIPSSVLQHVASLQIKKESQSTDQKDETNSIKREEETKKALPSKDKALDSEANIMKQNSGIIASENTSNNSLDDGGDLLDEETLREDARPYEYSYSTGSHTDEDKDGDEDSGNKNQNSPKEKQTVPEVRAGSKNIDIMALQSIRSIRPQKCVKVKVEPQEGSDNPENPDDFLVLSKDSKFELSGNQVKEQQSNSQAEAKKDCEDSLGKDSLRERWRKHLKGPLTQKYIGISQNFNKEANVQFFTEMKPCQENSEQDISELLGKSGTIESGGVLKTEDGSWSGISSSAAFSIIPRRATKGRRGSRHFQGHLLLPREQMKPKQQTKDGRSSAADFTVLDLEDEDEEDEKTDDSLDEIVDVVSGYQSEEVDVEKNNYVDYLEDDEQVDVETIEELSEEINFPYKKTTATHTQSFKQQCHSHISADEKASEKSRKVSLISSKLKDDCWGDKPHKETEAFAYYRRTHTANERRRRGEMRDLFEKLKITLGLLHSSKVSKSLILNRAFSEIQGLTDQADKLIGQKNLLSRKRSILIRKVSSLSGKTEEVVLKKLEYIYAKQQALEAQKRKKKLGSDEFCVSPRIGTQLEGSSASSVDLGQMLMNNRRGKPLILSRKRDQATENASPSDTPHSSANLVMTPQGQLLTLKGPLFSGPVVAVSPALLEGGLKPQVASSTMSQSENDDLFMMPRIVNVTSLAAEEDLGGMSGNKYRHEVPDGKPLDHLRDIAGSEASSLKDTERISSRGNHRDSRKALGPTQVLLANKDSGFPHVADVSTMQAAQEFIPKNMSGDVRGHRYKWKECELRGERLKSKESQFHKLKMKDLKDSSIEMELRKVASAIEEAALHPSELLTNMEDEDDTDETLTSLLNEIAFLNQQLNDDSGLAELSGSMDTEFSGDAQRAFISKLAPGNRSAFQVGHLGAGVKELPDVQEESESISPLLLHLEDDDFSENEKQLGDTASEPDVLKIVIDPEIKDSLVSHRKSSDGGQSTSGLPAEPESVSSPPILHMKTGPENSNTDTLWRPMPKLAPLGLKVANPPSDADGQSLKVMPALAPIAAKVGSIGHKMNLAGIDQEGRGSKVMPTLAPVVPKLGNSGAPSSSSGK</sequence>
<comment type="function">
    <text evidence="6">Functions as a dual-specificity transcription factor, regulating the expression of both MAX-network and T-box family target genes. Functions as a repressor or an activator. Binds to 5'-AATTTCACACCTAGGTGTGAAATT-3' core sequence and seems to regulate MYC-MAX target genes. Suppresses transcriptional activation by MYC and inhibits MYC-dependent cell transformation. Function activated by heterodimerization with MAX. This heterodimerization serves the dual function of both generating an E-box-binding heterodimer and simultaneously blocking interaction of a corepressor.</text>
</comment>
<comment type="subunit">
    <text evidence="1">Component of some MLL1/MLL complex, at least composed of the core components KMT2A/MLL1, ASH2L, HCFC1/HCF1, WDR5 and RBBP5, as well as the facultative components BACC1, CHD8, E2F6, HSP70, INO80C, KANSL1, LAS1L, MAX, MCRS1, MGA, MYST1/MOF, PELP1, PHF20, PRP31, RING2, RUVB1/TIP49A, RUVB2/TIP49B, SENP3, TAF1, TAF4, TAF6, TAF7, TAF9 and TEX10. Interacts with ZMYND11 (By similarity). Interacts with MAX. Requires heterodimerization with MAX for E-box binding.</text>
</comment>
<comment type="subcellular location">
    <subcellularLocation>
        <location evidence="11">Nucleus</location>
    </subcellularLocation>
</comment>
<comment type="alternative products">
    <event type="alternative splicing"/>
    <isoform>
        <id>A2AWL7-1</id>
        <name>1</name>
        <sequence type="displayed"/>
    </isoform>
    <isoform>
        <id>A2AWL7-2</id>
        <name>2</name>
        <sequence type="described" ref="VSP_034539 VSP_034540 VSP_034541 VSP_034542"/>
    </isoform>
    <isoform>
        <id>A2AWL7-3</id>
        <name>3</name>
        <sequence type="described" ref="VSP_034538"/>
    </isoform>
    <isoform>
        <id>A2AWL7-4</id>
        <name>4</name>
        <sequence type="described" ref="VSP_034536 VSP_034537"/>
    </isoform>
</comment>
<comment type="tissue specificity">
    <text evidence="7">Highly expressed in germ cells and granulosa cells.</text>
</comment>
<comment type="developmental stage">
    <text evidence="6 7">Expressed at 9.5 dpc, 10 dpc and 10.5 dpc in the limb buds, branchial arches and the tail region (PubMed:10601024). In germ cells and granulosa cells, expressed from early embryonic through adult developmental stages (PubMed:39545409).</text>
</comment>
<comment type="domain">
    <text>Transcription repression is enhanced or dependent on the presence of the T-box DNA-binding domain.</text>
</comment>
<comment type="sequence caution" evidence="11">
    <conflict type="erroneous initiation">
        <sequence resource="EMBL-CDS" id="BAD32240"/>
    </conflict>
    <text>Extended N-terminus.</text>
</comment>
<organism>
    <name type="scientific">Mus musculus</name>
    <name type="common">Mouse</name>
    <dbReference type="NCBI Taxonomy" id="10090"/>
    <lineage>
        <taxon>Eukaryota</taxon>
        <taxon>Metazoa</taxon>
        <taxon>Chordata</taxon>
        <taxon>Craniata</taxon>
        <taxon>Vertebrata</taxon>
        <taxon>Euteleostomi</taxon>
        <taxon>Mammalia</taxon>
        <taxon>Eutheria</taxon>
        <taxon>Euarchontoglires</taxon>
        <taxon>Glires</taxon>
        <taxon>Rodentia</taxon>
        <taxon>Myomorpha</taxon>
        <taxon>Muroidea</taxon>
        <taxon>Muridae</taxon>
        <taxon>Murinae</taxon>
        <taxon>Mus</taxon>
        <taxon>Mus</taxon>
    </lineage>
</organism>
<accession>A2AWL7</accession>
<accession>A2AWL6</accession>
<accession>Q3TS36</accession>
<accession>Q6A056</accession>
<accession>Q8BQX1</accession>
<accession>Q8CCL4</accession>
<accession>Q9QXJ5</accession>
<evidence type="ECO:0000250" key="1"/>
<evidence type="ECO:0000250" key="2">
    <source>
        <dbReference type="UniProtKB" id="Q8IWI9"/>
    </source>
</evidence>
<evidence type="ECO:0000255" key="3">
    <source>
        <dbReference type="PROSITE-ProRule" id="PRU00201"/>
    </source>
</evidence>
<evidence type="ECO:0000255" key="4">
    <source>
        <dbReference type="PROSITE-ProRule" id="PRU00981"/>
    </source>
</evidence>
<evidence type="ECO:0000256" key="5">
    <source>
        <dbReference type="SAM" id="MobiDB-lite"/>
    </source>
</evidence>
<evidence type="ECO:0000269" key="6">
    <source>
    </source>
</evidence>
<evidence type="ECO:0000269" key="7">
    <source>
    </source>
</evidence>
<evidence type="ECO:0000303" key="8">
    <source>
    </source>
</evidence>
<evidence type="ECO:0000303" key="9">
    <source>
    </source>
</evidence>
<evidence type="ECO:0000303" key="10">
    <source>
    </source>
</evidence>
<evidence type="ECO:0000305" key="11"/>
<proteinExistence type="evidence at transcript level"/>
<reference key="1">
    <citation type="journal article" date="1999" name="EMBO J.">
        <title>Mga, a dual-specificity transcription factor that interacts with Max and contains a T-domain DNA-binding motif.</title>
        <authorList>
            <person name="Hurlin P.J."/>
            <person name="Steingrimsson E."/>
            <person name="Copeland N.G."/>
            <person name="Jenkins N.A."/>
            <person name="Eisenman R.N."/>
        </authorList>
    </citation>
    <scope>NUCLEOTIDE SEQUENCE [MRNA] (ISOFORM 1)</scope>
    <scope>FUNCTION</scope>
    <scope>DEVELOPMENTAL STAGE</scope>
</reference>
<reference key="2">
    <citation type="journal article" date="2000" name="EMBO J.">
        <authorList>
            <person name="Hurlin P.J."/>
            <person name="Steingrimsson E."/>
            <person name="Copeland N.G."/>
            <person name="Jenkins N.A."/>
            <person name="Eisenman R.N."/>
        </authorList>
    </citation>
    <scope>ERRATUM OF PUBMED:10601024</scope>
</reference>
<reference key="3">
    <citation type="journal article" date="2005" name="Science">
        <title>The transcriptional landscape of the mammalian genome.</title>
        <authorList>
            <person name="Carninci P."/>
            <person name="Kasukawa T."/>
            <person name="Katayama S."/>
            <person name="Gough J."/>
            <person name="Frith M.C."/>
            <person name="Maeda N."/>
            <person name="Oyama R."/>
            <person name="Ravasi T."/>
            <person name="Lenhard B."/>
            <person name="Wells C."/>
            <person name="Kodzius R."/>
            <person name="Shimokawa K."/>
            <person name="Bajic V.B."/>
            <person name="Brenner S.E."/>
            <person name="Batalov S."/>
            <person name="Forrest A.R."/>
            <person name="Zavolan M."/>
            <person name="Davis M.J."/>
            <person name="Wilming L.G."/>
            <person name="Aidinis V."/>
            <person name="Allen J.E."/>
            <person name="Ambesi-Impiombato A."/>
            <person name="Apweiler R."/>
            <person name="Aturaliya R.N."/>
            <person name="Bailey T.L."/>
            <person name="Bansal M."/>
            <person name="Baxter L."/>
            <person name="Beisel K.W."/>
            <person name="Bersano T."/>
            <person name="Bono H."/>
            <person name="Chalk A.M."/>
            <person name="Chiu K.P."/>
            <person name="Choudhary V."/>
            <person name="Christoffels A."/>
            <person name="Clutterbuck D.R."/>
            <person name="Crowe M.L."/>
            <person name="Dalla E."/>
            <person name="Dalrymple B.P."/>
            <person name="de Bono B."/>
            <person name="Della Gatta G."/>
            <person name="di Bernardo D."/>
            <person name="Down T."/>
            <person name="Engstrom P."/>
            <person name="Fagiolini M."/>
            <person name="Faulkner G."/>
            <person name="Fletcher C.F."/>
            <person name="Fukushima T."/>
            <person name="Furuno M."/>
            <person name="Futaki S."/>
            <person name="Gariboldi M."/>
            <person name="Georgii-Hemming P."/>
            <person name="Gingeras T.R."/>
            <person name="Gojobori T."/>
            <person name="Green R.E."/>
            <person name="Gustincich S."/>
            <person name="Harbers M."/>
            <person name="Hayashi Y."/>
            <person name="Hensch T.K."/>
            <person name="Hirokawa N."/>
            <person name="Hill D."/>
            <person name="Huminiecki L."/>
            <person name="Iacono M."/>
            <person name="Ikeo K."/>
            <person name="Iwama A."/>
            <person name="Ishikawa T."/>
            <person name="Jakt M."/>
            <person name="Kanapin A."/>
            <person name="Katoh M."/>
            <person name="Kawasawa Y."/>
            <person name="Kelso J."/>
            <person name="Kitamura H."/>
            <person name="Kitano H."/>
            <person name="Kollias G."/>
            <person name="Krishnan S.P."/>
            <person name="Kruger A."/>
            <person name="Kummerfeld S.K."/>
            <person name="Kurochkin I.V."/>
            <person name="Lareau L.F."/>
            <person name="Lazarevic D."/>
            <person name="Lipovich L."/>
            <person name="Liu J."/>
            <person name="Liuni S."/>
            <person name="McWilliam S."/>
            <person name="Madan Babu M."/>
            <person name="Madera M."/>
            <person name="Marchionni L."/>
            <person name="Matsuda H."/>
            <person name="Matsuzawa S."/>
            <person name="Miki H."/>
            <person name="Mignone F."/>
            <person name="Miyake S."/>
            <person name="Morris K."/>
            <person name="Mottagui-Tabar S."/>
            <person name="Mulder N."/>
            <person name="Nakano N."/>
            <person name="Nakauchi H."/>
            <person name="Ng P."/>
            <person name="Nilsson R."/>
            <person name="Nishiguchi S."/>
            <person name="Nishikawa S."/>
            <person name="Nori F."/>
            <person name="Ohara O."/>
            <person name="Okazaki Y."/>
            <person name="Orlando V."/>
            <person name="Pang K.C."/>
            <person name="Pavan W.J."/>
            <person name="Pavesi G."/>
            <person name="Pesole G."/>
            <person name="Petrovsky N."/>
            <person name="Piazza S."/>
            <person name="Reed J."/>
            <person name="Reid J.F."/>
            <person name="Ring B.Z."/>
            <person name="Ringwald M."/>
            <person name="Rost B."/>
            <person name="Ruan Y."/>
            <person name="Salzberg S.L."/>
            <person name="Sandelin A."/>
            <person name="Schneider C."/>
            <person name="Schoenbach C."/>
            <person name="Sekiguchi K."/>
            <person name="Semple C.A."/>
            <person name="Seno S."/>
            <person name="Sessa L."/>
            <person name="Sheng Y."/>
            <person name="Shibata Y."/>
            <person name="Shimada H."/>
            <person name="Shimada K."/>
            <person name="Silva D."/>
            <person name="Sinclair B."/>
            <person name="Sperling S."/>
            <person name="Stupka E."/>
            <person name="Sugiura K."/>
            <person name="Sultana R."/>
            <person name="Takenaka Y."/>
            <person name="Taki K."/>
            <person name="Tammoja K."/>
            <person name="Tan S.L."/>
            <person name="Tang S."/>
            <person name="Taylor M.S."/>
            <person name="Tegner J."/>
            <person name="Teichmann S.A."/>
            <person name="Ueda H.R."/>
            <person name="van Nimwegen E."/>
            <person name="Verardo R."/>
            <person name="Wei C.L."/>
            <person name="Yagi K."/>
            <person name="Yamanishi H."/>
            <person name="Zabarovsky E."/>
            <person name="Zhu S."/>
            <person name="Zimmer A."/>
            <person name="Hide W."/>
            <person name="Bult C."/>
            <person name="Grimmond S.M."/>
            <person name="Teasdale R.D."/>
            <person name="Liu E.T."/>
            <person name="Brusic V."/>
            <person name="Quackenbush J."/>
            <person name="Wahlestedt C."/>
            <person name="Mattick J.S."/>
            <person name="Hume D.A."/>
            <person name="Kai C."/>
            <person name="Sasaki D."/>
            <person name="Tomaru Y."/>
            <person name="Fukuda S."/>
            <person name="Kanamori-Katayama M."/>
            <person name="Suzuki M."/>
            <person name="Aoki J."/>
            <person name="Arakawa T."/>
            <person name="Iida J."/>
            <person name="Imamura K."/>
            <person name="Itoh M."/>
            <person name="Kato T."/>
            <person name="Kawaji H."/>
            <person name="Kawagashira N."/>
            <person name="Kawashima T."/>
            <person name="Kojima M."/>
            <person name="Kondo S."/>
            <person name="Konno H."/>
            <person name="Nakano K."/>
            <person name="Ninomiya N."/>
            <person name="Nishio T."/>
            <person name="Okada M."/>
            <person name="Plessy C."/>
            <person name="Shibata K."/>
            <person name="Shiraki T."/>
            <person name="Suzuki S."/>
            <person name="Tagami M."/>
            <person name="Waki K."/>
            <person name="Watahiki A."/>
            <person name="Okamura-Oho Y."/>
            <person name="Suzuki H."/>
            <person name="Kawai J."/>
            <person name="Hayashizaki Y."/>
        </authorList>
    </citation>
    <scope>NUCLEOTIDE SEQUENCE [LARGE SCALE MRNA] (ISOFORM 4)</scope>
    <scope>NUCLEOTIDE SEQUENCE [LARGE SCALE MRNA] OF 1-1129 (ISOFORM 1)</scope>
    <scope>NUCLEOTIDE SEQUENCE [LARGE SCALE MRNA] OF 1-1129 (ISOFORM 3)</scope>
    <source>
        <strain>C57BL/6J</strain>
        <tissue>Colon</tissue>
        <tissue>Corpora quadrigemina</tissue>
        <tissue>Embryo</tissue>
        <tissue>Olfactory bulb</tissue>
    </source>
</reference>
<reference key="4">
    <citation type="journal article" date="2009" name="PLoS Biol.">
        <title>Lineage-specific biology revealed by a finished genome assembly of the mouse.</title>
        <authorList>
            <person name="Church D.M."/>
            <person name="Goodstadt L."/>
            <person name="Hillier L.W."/>
            <person name="Zody M.C."/>
            <person name="Goldstein S."/>
            <person name="She X."/>
            <person name="Bult C.J."/>
            <person name="Agarwala R."/>
            <person name="Cherry J.L."/>
            <person name="DiCuccio M."/>
            <person name="Hlavina W."/>
            <person name="Kapustin Y."/>
            <person name="Meric P."/>
            <person name="Maglott D."/>
            <person name="Birtle Z."/>
            <person name="Marques A.C."/>
            <person name="Graves T."/>
            <person name="Zhou S."/>
            <person name="Teague B."/>
            <person name="Potamousis K."/>
            <person name="Churas C."/>
            <person name="Place M."/>
            <person name="Herschleb J."/>
            <person name="Runnheim R."/>
            <person name="Forrest D."/>
            <person name="Amos-Landgraf J."/>
            <person name="Schwartz D.C."/>
            <person name="Cheng Z."/>
            <person name="Lindblad-Toh K."/>
            <person name="Eichler E.E."/>
            <person name="Ponting C.P."/>
        </authorList>
    </citation>
    <scope>NUCLEOTIDE SEQUENCE [LARGE SCALE GENOMIC DNA]</scope>
    <source>
        <strain>C57BL/6J</strain>
    </source>
</reference>
<reference key="5">
    <citation type="journal article" date="2004" name="DNA Res.">
        <title>Prediction of the coding sequences of mouse homologues of KIAA gene: IV. The complete nucleotide sequences of 500 mouse KIAA-homologous cDNAs identified by screening of terminal sequences of cDNA clones randomly sampled from size-fractionated libraries.</title>
        <authorList>
            <person name="Okazaki N."/>
            <person name="Kikuno R."/>
            <person name="Ohara R."/>
            <person name="Inamoto S."/>
            <person name="Koseki H."/>
            <person name="Hiraoka S."/>
            <person name="Saga Y."/>
            <person name="Seino S."/>
            <person name="Nishimura M."/>
            <person name="Kaisho T."/>
            <person name="Hoshino K."/>
            <person name="Kitamura H."/>
            <person name="Nagase T."/>
            <person name="Ohara O."/>
            <person name="Koga H."/>
        </authorList>
    </citation>
    <scope>NUCLEOTIDE SEQUENCE [LARGE SCALE MRNA] OF 1-2465 (ISOFORM 2)</scope>
    <source>
        <tissue>Thymus</tissue>
    </source>
</reference>
<reference key="6">
    <citation type="journal article" date="2024" name="J. Clin. Invest.">
        <title>MGA loss-of-function variants cause premature ovarian insufficiency.</title>
        <authorList>
            <person name="Tang S."/>
            <person name="Guo T."/>
            <person name="Song C."/>
            <person name="Wang L."/>
            <person name="Zhang J."/>
            <person name="Rajkovic A."/>
            <person name="Lin X."/>
            <person name="Chen S."/>
            <person name="Liu Y."/>
            <person name="Tian W."/>
            <person name="Wu B."/>
            <person name="Wang S."/>
            <person name="Wang W."/>
            <person name="Lai Y."/>
            <person name="Wang A."/>
            <person name="Xu S."/>
            <person name="Jin L."/>
            <person name="Ke H."/>
            <person name="Zhao S."/>
            <person name="Li Y."/>
            <person name="Qin Y."/>
            <person name="Zhang F."/>
            <person name="Chen Z.J."/>
        </authorList>
    </citation>
    <scope>TISSUE SPECIFICITY</scope>
    <scope>DEVELOPMENTAL STAGE</scope>
</reference>
<dbReference type="EMBL" id="AF205935">
    <property type="protein sequence ID" value="AAF24761.1"/>
    <property type="molecule type" value="mRNA"/>
</dbReference>
<dbReference type="EMBL" id="AK032570">
    <property type="protein sequence ID" value="BAC27930.1"/>
    <property type="molecule type" value="mRNA"/>
</dbReference>
<dbReference type="EMBL" id="AK046252">
    <property type="protein sequence ID" value="BAC32658.1"/>
    <property type="molecule type" value="mRNA"/>
</dbReference>
<dbReference type="EMBL" id="AK133775">
    <property type="protein sequence ID" value="BAE21832.1"/>
    <property type="molecule type" value="mRNA"/>
</dbReference>
<dbReference type="EMBL" id="AK162302">
    <property type="protein sequence ID" value="BAE36840.1"/>
    <property type="molecule type" value="mRNA"/>
</dbReference>
<dbReference type="EMBL" id="AL954662">
    <property type="status" value="NOT_ANNOTATED_CDS"/>
    <property type="molecule type" value="Genomic_DNA"/>
</dbReference>
<dbReference type="EMBL" id="AK172962">
    <property type="protein sequence ID" value="BAD32240.1"/>
    <property type="status" value="ALT_INIT"/>
    <property type="molecule type" value="mRNA"/>
</dbReference>
<dbReference type="RefSeq" id="NP_038748.2">
    <property type="nucleotide sequence ID" value="NM_013720.2"/>
</dbReference>
<dbReference type="SMR" id="A2AWL7"/>
<dbReference type="BioGRID" id="205889">
    <property type="interactions" value="25"/>
</dbReference>
<dbReference type="FunCoup" id="A2AWL7">
    <property type="interactions" value="1902"/>
</dbReference>
<dbReference type="IntAct" id="A2AWL7">
    <property type="interactions" value="6"/>
</dbReference>
<dbReference type="STRING" id="10090.ENSMUSP00000106401"/>
<dbReference type="GlyGen" id="A2AWL7">
    <property type="glycosylation" value="9 sites, 2 N-linked glycans (2 sites), 1 O-linked glycan (7 sites)"/>
</dbReference>
<dbReference type="iPTMnet" id="A2AWL7"/>
<dbReference type="PhosphoSitePlus" id="A2AWL7"/>
<dbReference type="jPOST" id="A2AWL7"/>
<dbReference type="PaxDb" id="10090-ENSMUSP00000106401"/>
<dbReference type="PeptideAtlas" id="A2AWL7"/>
<dbReference type="ProteomicsDB" id="295896">
    <molecule id="A2AWL7-1"/>
</dbReference>
<dbReference type="ProteomicsDB" id="295897">
    <molecule id="A2AWL7-2"/>
</dbReference>
<dbReference type="ProteomicsDB" id="295898">
    <molecule id="A2AWL7-3"/>
</dbReference>
<dbReference type="ProteomicsDB" id="295899">
    <molecule id="A2AWL7-4"/>
</dbReference>
<dbReference type="Pumba" id="A2AWL7"/>
<dbReference type="Antibodypedia" id="6067">
    <property type="antibodies" value="86 antibodies from 15 providers"/>
</dbReference>
<dbReference type="DNASU" id="29808"/>
<dbReference type="Ensembl" id="ENSMUST00000046717.13">
    <molecule id="A2AWL7-1"/>
    <property type="protein sequence ID" value="ENSMUSP00000043795.7"/>
    <property type="gene ID" value="ENSMUSG00000033943.16"/>
</dbReference>
<dbReference type="Ensembl" id="ENSMUST00000110773.9">
    <molecule id="A2AWL7-3"/>
    <property type="protein sequence ID" value="ENSMUSP00000106400.3"/>
    <property type="gene ID" value="ENSMUSG00000033943.16"/>
</dbReference>
<dbReference type="Ensembl" id="ENSMUST00000156510.2">
    <molecule id="A2AWL7-2"/>
    <property type="protein sequence ID" value="ENSMUSP00000119044.2"/>
    <property type="gene ID" value="ENSMUSG00000033943.16"/>
</dbReference>
<dbReference type="GeneID" id="29808"/>
<dbReference type="KEGG" id="mmu:29808"/>
<dbReference type="UCSC" id="uc008lur.1">
    <molecule id="A2AWL7-4"/>
    <property type="organism name" value="mouse"/>
</dbReference>
<dbReference type="AGR" id="MGI:1352483"/>
<dbReference type="CTD" id="23269"/>
<dbReference type="MGI" id="MGI:1352483">
    <property type="gene designation" value="Mga"/>
</dbReference>
<dbReference type="VEuPathDB" id="HostDB:ENSMUSG00000033943"/>
<dbReference type="eggNOG" id="KOG3585">
    <property type="taxonomic scope" value="Eukaryota"/>
</dbReference>
<dbReference type="GeneTree" id="ENSGT00940000156269"/>
<dbReference type="HOGENOM" id="CLU_000469_1_0_1"/>
<dbReference type="InParanoid" id="A2AWL7"/>
<dbReference type="OrthoDB" id="6119313at2759"/>
<dbReference type="PhylomeDB" id="A2AWL7"/>
<dbReference type="Reactome" id="R-MMU-8953750">
    <property type="pathway name" value="Transcriptional Regulation by E2F6"/>
</dbReference>
<dbReference type="BioGRID-ORCS" id="29808">
    <property type="hits" value="9 hits in 82 CRISPR screens"/>
</dbReference>
<dbReference type="ChiTaRS" id="Mga">
    <property type="organism name" value="mouse"/>
</dbReference>
<dbReference type="PRO" id="PR:A2AWL7"/>
<dbReference type="Proteomes" id="UP000000589">
    <property type="component" value="Chromosome 2"/>
</dbReference>
<dbReference type="RNAct" id="A2AWL7">
    <property type="molecule type" value="protein"/>
</dbReference>
<dbReference type="Bgee" id="ENSMUSG00000033943">
    <property type="expression patterns" value="Expressed in undifferentiated genital tubercle and 249 other cell types or tissues"/>
</dbReference>
<dbReference type="ExpressionAtlas" id="A2AWL7">
    <property type="expression patterns" value="baseline and differential"/>
</dbReference>
<dbReference type="GO" id="GO:0071339">
    <property type="term" value="C:MLL1 complex"/>
    <property type="evidence" value="ECO:0000250"/>
    <property type="project" value="UniProtKB"/>
</dbReference>
<dbReference type="GO" id="GO:0005667">
    <property type="term" value="C:transcription regulator complex"/>
    <property type="evidence" value="ECO:0000314"/>
    <property type="project" value="MGI"/>
</dbReference>
<dbReference type="GO" id="GO:0001228">
    <property type="term" value="F:DNA-binding transcription activator activity, RNA polymerase II-specific"/>
    <property type="evidence" value="ECO:0000314"/>
    <property type="project" value="NTNU_SB"/>
</dbReference>
<dbReference type="GO" id="GO:0003700">
    <property type="term" value="F:DNA-binding transcription factor activity"/>
    <property type="evidence" value="ECO:0000304"/>
    <property type="project" value="MGI"/>
</dbReference>
<dbReference type="GO" id="GO:0046983">
    <property type="term" value="F:protein dimerization activity"/>
    <property type="evidence" value="ECO:0007669"/>
    <property type="project" value="InterPro"/>
</dbReference>
<dbReference type="GO" id="GO:0000978">
    <property type="term" value="F:RNA polymerase II cis-regulatory region sequence-specific DNA binding"/>
    <property type="evidence" value="ECO:0007669"/>
    <property type="project" value="InterPro"/>
</dbReference>
<dbReference type="GO" id="GO:0000977">
    <property type="term" value="F:RNA polymerase II transcription regulatory region sequence-specific DNA binding"/>
    <property type="evidence" value="ECO:0000314"/>
    <property type="project" value="NTNU_SB"/>
</dbReference>
<dbReference type="GO" id="GO:1990830">
    <property type="term" value="P:cellular response to leukemia inhibitory factor"/>
    <property type="evidence" value="ECO:0000270"/>
    <property type="project" value="MGI"/>
</dbReference>
<dbReference type="GO" id="GO:0045944">
    <property type="term" value="P:positive regulation of transcription by RNA polymerase II"/>
    <property type="evidence" value="ECO:0000314"/>
    <property type="project" value="NTNU_SB"/>
</dbReference>
<dbReference type="CDD" id="cd18911">
    <property type="entry name" value="bHLHzip_MGA"/>
    <property type="match status" value="1"/>
</dbReference>
<dbReference type="CDD" id="cd20195">
    <property type="entry name" value="T-box_MGA-like"/>
    <property type="match status" value="1"/>
</dbReference>
<dbReference type="FunFam" id="2.60.40.820:FF:000009">
    <property type="entry name" value="MAX gene-associated protein isoform X1"/>
    <property type="match status" value="1"/>
</dbReference>
<dbReference type="FunFam" id="4.10.280.10:FF:000040">
    <property type="entry name" value="MAX gene-associated protein isoform X1"/>
    <property type="match status" value="1"/>
</dbReference>
<dbReference type="Gene3D" id="4.10.280.10">
    <property type="entry name" value="Helix-loop-helix DNA-binding domain"/>
    <property type="match status" value="1"/>
</dbReference>
<dbReference type="Gene3D" id="2.60.40.820">
    <property type="entry name" value="Transcription factor, T-box"/>
    <property type="match status" value="1"/>
</dbReference>
<dbReference type="InterPro" id="IPR011598">
    <property type="entry name" value="bHLH_dom"/>
</dbReference>
<dbReference type="InterPro" id="IPR036638">
    <property type="entry name" value="HLH_DNA-bd_sf"/>
</dbReference>
<dbReference type="InterPro" id="IPR037935">
    <property type="entry name" value="MAX_gene-associated_bHLHzip"/>
</dbReference>
<dbReference type="InterPro" id="IPR032060">
    <property type="entry name" value="MGA_dom"/>
</dbReference>
<dbReference type="InterPro" id="IPR008967">
    <property type="entry name" value="p53-like_TF_DNA-bd_sf"/>
</dbReference>
<dbReference type="InterPro" id="IPR046360">
    <property type="entry name" value="T-box_DNA-bd"/>
</dbReference>
<dbReference type="InterPro" id="IPR036960">
    <property type="entry name" value="T-box_sf"/>
</dbReference>
<dbReference type="InterPro" id="IPR001699">
    <property type="entry name" value="TF_T-box"/>
</dbReference>
<dbReference type="InterPro" id="IPR018186">
    <property type="entry name" value="TF_T-box_CS"/>
</dbReference>
<dbReference type="PANTHER" id="PTHR11267:SF32">
    <property type="entry name" value="MAX GENE-ASSOCIATED PROTEIN"/>
    <property type="match status" value="1"/>
</dbReference>
<dbReference type="PANTHER" id="PTHR11267">
    <property type="entry name" value="T-BOX PROTEIN-RELATED"/>
    <property type="match status" value="1"/>
</dbReference>
<dbReference type="Pfam" id="PF00010">
    <property type="entry name" value="HLH"/>
    <property type="match status" value="1"/>
</dbReference>
<dbReference type="Pfam" id="PF16059">
    <property type="entry name" value="MGA_dom"/>
    <property type="match status" value="1"/>
</dbReference>
<dbReference type="Pfam" id="PF00907">
    <property type="entry name" value="T-box"/>
    <property type="match status" value="1"/>
</dbReference>
<dbReference type="PRINTS" id="PR00937">
    <property type="entry name" value="TBOX"/>
</dbReference>
<dbReference type="SMART" id="SM00353">
    <property type="entry name" value="HLH"/>
    <property type="match status" value="1"/>
</dbReference>
<dbReference type="SMART" id="SM00425">
    <property type="entry name" value="TBOX"/>
    <property type="match status" value="1"/>
</dbReference>
<dbReference type="SUPFAM" id="SSF47459">
    <property type="entry name" value="HLH, helix-loop-helix DNA-binding domain"/>
    <property type="match status" value="1"/>
</dbReference>
<dbReference type="SUPFAM" id="SSF49417">
    <property type="entry name" value="p53-like transcription factors"/>
    <property type="match status" value="1"/>
</dbReference>
<dbReference type="PROSITE" id="PS50888">
    <property type="entry name" value="BHLH"/>
    <property type="match status" value="1"/>
</dbReference>
<dbReference type="PROSITE" id="PS01264">
    <property type="entry name" value="TBOX_2"/>
    <property type="match status" value="1"/>
</dbReference>
<dbReference type="PROSITE" id="PS50252">
    <property type="entry name" value="TBOX_3"/>
    <property type="match status" value="1"/>
</dbReference>
<gene>
    <name evidence="8" type="primary">Mga</name>
    <name evidence="9" type="synonym">Kiaa4252</name>
</gene>
<feature type="chain" id="PRO_0000342693" description="MAX gene-associated protein">
    <location>
        <begin position="1"/>
        <end position="3003"/>
    </location>
</feature>
<feature type="domain" description="bHLH" evidence="4">
    <location>
        <begin position="2362"/>
        <end position="2413"/>
    </location>
</feature>
<feature type="DNA-binding region" description="T-box" evidence="3">
    <location>
        <begin position="84"/>
        <end position="260"/>
    </location>
</feature>
<feature type="region of interest" description="Disordered" evidence="5">
    <location>
        <begin position="259"/>
        <end position="290"/>
    </location>
</feature>
<feature type="region of interest" description="Disordered" evidence="5">
    <location>
        <begin position="553"/>
        <end position="647"/>
    </location>
</feature>
<feature type="region of interest" description="Disordered" evidence="5">
    <location>
        <begin position="871"/>
        <end position="946"/>
    </location>
</feature>
<feature type="region of interest" description="Disordered" evidence="5">
    <location>
        <begin position="967"/>
        <end position="987"/>
    </location>
</feature>
<feature type="region of interest" description="Disordered" evidence="5">
    <location>
        <begin position="1111"/>
        <end position="1130"/>
    </location>
</feature>
<feature type="region of interest" description="Disordered" evidence="5">
    <location>
        <begin position="1186"/>
        <end position="1215"/>
    </location>
</feature>
<feature type="region of interest" description="Disordered" evidence="5">
    <location>
        <begin position="1246"/>
        <end position="1277"/>
    </location>
</feature>
<feature type="region of interest" description="Disordered" evidence="5">
    <location>
        <begin position="1297"/>
        <end position="1323"/>
    </location>
</feature>
<feature type="region of interest" description="Disordered" evidence="5">
    <location>
        <begin position="1376"/>
        <end position="1424"/>
    </location>
</feature>
<feature type="region of interest" description="Disordered" evidence="5">
    <location>
        <begin position="1476"/>
        <end position="1508"/>
    </location>
</feature>
<feature type="region of interest" description="Disordered" evidence="5">
    <location>
        <begin position="1722"/>
        <end position="1746"/>
    </location>
</feature>
<feature type="region of interest" description="Disordered" evidence="5">
    <location>
        <begin position="1856"/>
        <end position="1885"/>
    </location>
</feature>
<feature type="region of interest" description="Disordered" evidence="5">
    <location>
        <begin position="1920"/>
        <end position="1954"/>
    </location>
</feature>
<feature type="region of interest" description="Disordered" evidence="5">
    <location>
        <begin position="1964"/>
        <end position="1983"/>
    </location>
</feature>
<feature type="region of interest" description="Disordered" evidence="5">
    <location>
        <begin position="1988"/>
        <end position="2038"/>
    </location>
</feature>
<feature type="region of interest" description="Disordered" evidence="5">
    <location>
        <begin position="2087"/>
        <end position="2110"/>
    </location>
</feature>
<feature type="region of interest" description="Disordered" evidence="5">
    <location>
        <begin position="2207"/>
        <end position="2255"/>
    </location>
</feature>
<feature type="region of interest" description="Disordered" evidence="5">
    <location>
        <begin position="2515"/>
        <end position="2534"/>
    </location>
</feature>
<feature type="region of interest" description="Disordered" evidence="5">
    <location>
        <begin position="2629"/>
        <end position="2654"/>
    </location>
</feature>
<feature type="region of interest" description="Disordered" evidence="5">
    <location>
        <begin position="2877"/>
        <end position="2917"/>
    </location>
</feature>
<feature type="compositionally biased region" description="Basic and acidic residues" evidence="5">
    <location>
        <begin position="259"/>
        <end position="277"/>
    </location>
</feature>
<feature type="compositionally biased region" description="Polar residues" evidence="5">
    <location>
        <begin position="278"/>
        <end position="288"/>
    </location>
</feature>
<feature type="compositionally biased region" description="Polar residues" evidence="5">
    <location>
        <begin position="595"/>
        <end position="607"/>
    </location>
</feature>
<feature type="compositionally biased region" description="Basic residues" evidence="5">
    <location>
        <begin position="610"/>
        <end position="621"/>
    </location>
</feature>
<feature type="compositionally biased region" description="Polar residues" evidence="5">
    <location>
        <begin position="871"/>
        <end position="913"/>
    </location>
</feature>
<feature type="compositionally biased region" description="Polar residues" evidence="5">
    <location>
        <begin position="937"/>
        <end position="946"/>
    </location>
</feature>
<feature type="compositionally biased region" description="Low complexity" evidence="5">
    <location>
        <begin position="969"/>
        <end position="978"/>
    </location>
</feature>
<feature type="compositionally biased region" description="Basic and acidic residues" evidence="5">
    <location>
        <begin position="1113"/>
        <end position="1122"/>
    </location>
</feature>
<feature type="compositionally biased region" description="Low complexity" evidence="5">
    <location>
        <begin position="1248"/>
        <end position="1269"/>
    </location>
</feature>
<feature type="compositionally biased region" description="Low complexity" evidence="5">
    <location>
        <begin position="1303"/>
        <end position="1315"/>
    </location>
</feature>
<feature type="compositionally biased region" description="Polar residues" evidence="5">
    <location>
        <begin position="1488"/>
        <end position="1507"/>
    </location>
</feature>
<feature type="compositionally biased region" description="Polar residues" evidence="5">
    <location>
        <begin position="1735"/>
        <end position="1746"/>
    </location>
</feature>
<feature type="compositionally biased region" description="Polar residues" evidence="5">
    <location>
        <begin position="1859"/>
        <end position="1880"/>
    </location>
</feature>
<feature type="compositionally biased region" description="Polar residues" evidence="5">
    <location>
        <begin position="1964"/>
        <end position="1976"/>
    </location>
</feature>
<feature type="compositionally biased region" description="Polar residues" evidence="5">
    <location>
        <begin position="2088"/>
        <end position="2101"/>
    </location>
</feature>
<feature type="compositionally biased region" description="Basic and acidic residues" evidence="5">
    <location>
        <begin position="2220"/>
        <end position="2232"/>
    </location>
</feature>
<feature type="compositionally biased region" description="Acidic residues" evidence="5">
    <location>
        <begin position="2242"/>
        <end position="2255"/>
    </location>
</feature>
<feature type="compositionally biased region" description="Polar residues" evidence="5">
    <location>
        <begin position="2520"/>
        <end position="2534"/>
    </location>
</feature>
<feature type="compositionally biased region" description="Basic and acidic residues" evidence="5">
    <location>
        <begin position="2629"/>
        <end position="2651"/>
    </location>
</feature>
<feature type="modified residue" description="Phosphoserine" evidence="2">
    <location>
        <position position="531"/>
    </location>
</feature>
<feature type="modified residue" description="Phosphoserine" evidence="2">
    <location>
        <position position="604"/>
    </location>
</feature>
<feature type="modified residue" description="Phosphoserine" evidence="2">
    <location>
        <position position="848"/>
    </location>
</feature>
<feature type="modified residue" description="Phosphoserine" evidence="2">
    <location>
        <position position="921"/>
    </location>
</feature>
<feature type="modified residue" description="Phosphoserine" evidence="2">
    <location>
        <position position="1423"/>
    </location>
</feature>
<feature type="modified residue" description="Phosphoserine" evidence="2">
    <location>
        <position position="1450"/>
    </location>
</feature>
<feature type="modified residue" description="Omega-N-methylarginine" evidence="2">
    <location>
        <position position="2206"/>
    </location>
</feature>
<feature type="modified residue" description="Phosphoserine" evidence="2">
    <location>
        <position position="2480"/>
    </location>
</feature>
<feature type="modified residue" description="Phosphoserine" evidence="2">
    <location>
        <position position="2849"/>
    </location>
</feature>
<feature type="modified residue" description="Phosphoserine" evidence="2">
    <location>
        <position position="2860"/>
    </location>
</feature>
<feature type="cross-link" description="Glycyl lysine isopeptide (Lys-Gly) (interchain with G-Cter in SUMO2)" evidence="2">
    <location>
        <position position="4"/>
    </location>
</feature>
<feature type="cross-link" description="Glycyl lysine isopeptide (Lys-Gly) (interchain with G-Cter in SUMO2)" evidence="2">
    <location>
        <position position="178"/>
    </location>
</feature>
<feature type="cross-link" description="Glycyl lysine isopeptide (Lys-Gly) (interchain with G-Cter in SUMO2)" evidence="2">
    <location>
        <position position="323"/>
    </location>
</feature>
<feature type="cross-link" description="Glycyl lysine isopeptide (Lys-Gly) (interchain with G-Cter in SUMO2)" evidence="2">
    <location>
        <position position="329"/>
    </location>
</feature>
<feature type="cross-link" description="Glycyl lysine isopeptide (Lys-Gly) (interchain with G-Cter in SUMO2)" evidence="2">
    <location>
        <position position="348"/>
    </location>
</feature>
<feature type="cross-link" description="Glycyl lysine isopeptide (Lys-Gly) (interchain with G-Cter in SUMO2)" evidence="2">
    <location>
        <position position="431"/>
    </location>
</feature>
<feature type="cross-link" description="Glycyl lysine isopeptide (Lys-Gly) (interchain with G-Cter in SUMO2)" evidence="2">
    <location>
        <position position="458"/>
    </location>
</feature>
<feature type="cross-link" description="Glycyl lysine isopeptide (Lys-Gly) (interchain with G-Cter in SUMO2)" evidence="2">
    <location>
        <position position="463"/>
    </location>
</feature>
<feature type="cross-link" description="Glycyl lysine isopeptide (Lys-Gly) (interchain with G-Cter in SUMO2)" evidence="2">
    <location>
        <position position="480"/>
    </location>
</feature>
<feature type="cross-link" description="Glycyl lysine isopeptide (Lys-Gly) (interchain with G-Cter in SUMO2)" evidence="2">
    <location>
        <position position="567"/>
    </location>
</feature>
<feature type="cross-link" description="Glycyl lysine isopeptide (Lys-Gly) (interchain with G-Cter in SUMO2)" evidence="2">
    <location>
        <position position="610"/>
    </location>
</feature>
<feature type="cross-link" description="Glycyl lysine isopeptide (Lys-Gly) (interchain with G-Cter in SUMO2)" evidence="2">
    <location>
        <position position="651"/>
    </location>
</feature>
<feature type="cross-link" description="Glycyl lysine isopeptide (Lys-Gly) (interchain with G-Cter in SUMO2)" evidence="2">
    <location>
        <position position="782"/>
    </location>
</feature>
<feature type="cross-link" description="Glycyl lysine isopeptide (Lys-Gly) (interchain with G-Cter in SUMO2)" evidence="2">
    <location>
        <position position="788"/>
    </location>
</feature>
<feature type="cross-link" description="Glycyl lysine isopeptide (Lys-Gly) (interchain with G-Cter in SUMO2)" evidence="2">
    <location>
        <position position="814"/>
    </location>
</feature>
<feature type="cross-link" description="Glycyl lysine isopeptide (Lys-Gly) (interchain with G-Cter in SUMO2)" evidence="2">
    <location>
        <position position="823"/>
    </location>
</feature>
<feature type="cross-link" description="Glycyl lysine isopeptide (Lys-Gly) (interchain with G-Cter in SUMO2)" evidence="2">
    <location>
        <position position="925"/>
    </location>
</feature>
<feature type="cross-link" description="Glycyl lysine isopeptide (Lys-Gly) (interchain with G-Cter in SUMO2)" evidence="2">
    <location>
        <position position="987"/>
    </location>
</feature>
<feature type="cross-link" description="Glycyl lysine isopeptide (Lys-Gly) (interchain with G-Cter in SUMO2)" evidence="2">
    <location>
        <position position="1088"/>
    </location>
</feature>
<feature type="cross-link" description="Glycyl lysine isopeptide (Lys-Gly) (interchain with G-Cter in SUMO2)" evidence="2">
    <location>
        <position position="1136"/>
    </location>
</feature>
<feature type="cross-link" description="Glycyl lysine isopeptide (Lys-Gly) (interchain with G-Cter in SUMO2)" evidence="2">
    <location>
        <position position="1158"/>
    </location>
</feature>
<feature type="cross-link" description="Glycyl lysine isopeptide (Lys-Gly) (interchain with G-Cter in SUMO2)" evidence="2">
    <location>
        <position position="1194"/>
    </location>
</feature>
<feature type="cross-link" description="Glycyl lysine isopeptide (Lys-Gly) (interchain with G-Cter in SUMO2)" evidence="2">
    <location>
        <position position="1202"/>
    </location>
</feature>
<feature type="cross-link" description="Glycyl lysine isopeptide (Lys-Gly) (interchain with G-Cter in SUMO2)" evidence="2">
    <location>
        <position position="1454"/>
    </location>
</feature>
<feature type="cross-link" description="Glycyl lysine isopeptide (Lys-Gly) (interchain with G-Cter in SUMO2)" evidence="2">
    <location>
        <position position="1495"/>
    </location>
</feature>
<feature type="cross-link" description="Glycyl lysine isopeptide (Lys-Gly) (interchain with G-Cter in SUMO2)" evidence="2">
    <location>
        <position position="1937"/>
    </location>
</feature>
<feature type="cross-link" description="Glycyl lysine isopeptide (Lys-Gly) (interchain with G-Cter in SUMO2)" evidence="2">
    <location>
        <position position="1944"/>
    </location>
</feature>
<feature type="cross-link" description="Glycyl lysine isopeptide (Lys-Gly) (interchain with G-Cter in SUMO2)" evidence="2">
    <location>
        <position position="2060"/>
    </location>
</feature>
<feature type="cross-link" description="Glycyl lysine isopeptide (Lys-Gly) (interchain with G-Cter in SUMO2)" evidence="2">
    <location>
        <position position="2084"/>
    </location>
</feature>
<feature type="cross-link" description="Glycyl lysine isopeptide (Lys-Gly) (interchain with G-Cter in SUMO2)" evidence="2">
    <location>
        <position position="2104"/>
    </location>
</feature>
<feature type="cross-link" description="Glycyl lysine isopeptide (Lys-Gly) (interchain with G-Cter in SUMO2)" evidence="2">
    <location>
        <position position="2152"/>
    </location>
</feature>
<feature type="cross-link" description="Glycyl lysine isopeptide (Lys-Gly) (interchain with G-Cter in SUMO2)" evidence="2">
    <location>
        <position position="2179"/>
    </location>
</feature>
<feature type="cross-link" description="Glycyl lysine isopeptide (Lys-Gly) (interchain with G-Cter in SUMO2)" evidence="2">
    <location>
        <position position="2225"/>
    </location>
</feature>
<feature type="cross-link" description="Glycyl lysine isopeptide (Lys-Gly) (interchain with G-Cter in SUMO2)" evidence="2">
    <location>
        <position position="2317"/>
    </location>
</feature>
<feature type="cross-link" description="Glycyl lysine isopeptide (Lys-Gly) (interchain with G-Cter in SUMO2)" evidence="2">
    <location>
        <position position="2352"/>
    </location>
</feature>
<feature type="cross-link" description="Glycyl lysine isopeptide (Lys-Gly) (interchain with G-Cter in SUMO2)" evidence="2">
    <location>
        <position position="2396"/>
    </location>
</feature>
<feature type="cross-link" description="Glycyl lysine isopeptide (Lys-Gly) (interchain with G-Cter in SUMO2)" evidence="2">
    <location>
        <position position="2471"/>
    </location>
</feature>
<feature type="cross-link" description="Glycyl lysine isopeptide (Lys-Gly) (interchain with G-Cter in SUMO2)" evidence="2">
    <location>
        <position position="2568"/>
    </location>
</feature>
<feature type="cross-link" description="Glycyl lysine isopeptide (Lys-Gly) (interchain with G-Cter in SUMO2)" evidence="2">
    <location>
        <position position="2618"/>
    </location>
</feature>
<feature type="cross-link" description="Glycyl lysine isopeptide (Lys-Gly) (interchain with G-Cter in SUMO2)" evidence="2">
    <location>
        <position position="2724"/>
    </location>
</feature>
<feature type="cross-link" description="Glycyl lysine isopeptide (Lys-Gly) (interchain with G-Cter in SUMO2)" evidence="2">
    <location>
        <position position="2979"/>
    </location>
</feature>
<feature type="splice variant" id="VSP_034536" description="In isoform 4." evidence="10">
    <original>EAL</original>
    <variation>VWL</variation>
    <location>
        <begin position="669"/>
        <end position="671"/>
    </location>
</feature>
<feature type="splice variant" id="VSP_034537" description="In isoform 4." evidence="10">
    <location>
        <begin position="672"/>
        <end position="3003"/>
    </location>
</feature>
<feature type="splice variant" id="VSP_034538" description="In isoform 3." evidence="10">
    <location>
        <begin position="727"/>
        <end position="805"/>
    </location>
</feature>
<feature type="splice variant" id="VSP_034539" description="In isoform 2." evidence="9">
    <location>
        <position position="1214"/>
    </location>
</feature>
<feature type="splice variant" id="VSP_034540" description="In isoform 2." evidence="9">
    <location>
        <begin position="1521"/>
        <end position="1728"/>
    </location>
</feature>
<feature type="splice variant" id="VSP_034541" description="In isoform 2." evidence="9">
    <original>L</original>
    <variation>LLIPVQQGSPTLRPIQNPQLQGQRMVLQPVRGPSGMNLFR</variation>
    <location>
        <position position="1754"/>
    </location>
</feature>
<feature type="splice variant" id="VSP_034542" description="In isoform 2." evidence="9">
    <location>
        <begin position="2466"/>
        <end position="3003"/>
    </location>
</feature>
<feature type="sequence conflict" description="In Ref. 1; AAF24761." evidence="11" ref="1">
    <original>N</original>
    <variation>T</variation>
    <location>
        <position position="11"/>
    </location>
</feature>
<feature type="sequence conflict" description="In Ref. 3; BAC27930." evidence="11" ref="3">
    <original>H</original>
    <variation>Y</variation>
    <location>
        <position position="195"/>
    </location>
</feature>
<feature type="sequence conflict" description="In Ref. 1; AAF24761." evidence="11" ref="1">
    <original>Q</original>
    <variation>P</variation>
    <location>
        <position position="217"/>
    </location>
</feature>
<feature type="sequence conflict" description="In Ref. 1; AAF24761." evidence="11" ref="1">
    <original>H</original>
    <variation>P</variation>
    <location>
        <position position="342"/>
    </location>
</feature>
<feature type="sequence conflict" description="In Ref. 1; AAF24761." evidence="11" ref="1">
    <original>Q</original>
    <variation>P</variation>
    <location>
        <position position="346"/>
    </location>
</feature>
<feature type="sequence conflict" description="In Ref. 1; AAF24761." evidence="11" ref="1">
    <original>H</original>
    <variation>P</variation>
    <location>
        <position position="349"/>
    </location>
</feature>
<feature type="sequence conflict" description="In Ref. 1; AAF24761." evidence="11" ref="1">
    <original>S</original>
    <variation>R</variation>
    <location>
        <position position="359"/>
    </location>
</feature>
<feature type="sequence conflict" description="In Ref. 1; AAF24761." evidence="11" ref="1">
    <original>Q</original>
    <variation>P</variation>
    <location>
        <position position="403"/>
    </location>
</feature>
<feature type="sequence conflict" description="In Ref. 3; BAC32658." evidence="11" ref="3">
    <original>K</original>
    <variation>R</variation>
    <location>
        <position position="458"/>
    </location>
</feature>
<feature type="sequence conflict" description="In Ref. 1; AAF24761." evidence="11" ref="1">
    <original>T</original>
    <variation>P</variation>
    <location>
        <position position="634"/>
    </location>
</feature>
<feature type="sequence conflict" description="In Ref. 1; AAF24761." evidence="11" ref="1">
    <original>E</original>
    <variation>D</variation>
    <location>
        <position position="666"/>
    </location>
</feature>
<feature type="sequence conflict" description="In Ref. 1; AAF24761." evidence="11" ref="1">
    <original>A</original>
    <variation>G</variation>
    <location>
        <position position="752"/>
    </location>
</feature>
<feature type="sequence conflict" description="In Ref. 1; AAF24761." evidence="11" ref="1">
    <original>F</original>
    <variation>L</variation>
    <location>
        <position position="757"/>
    </location>
</feature>
<feature type="sequence conflict" description="In Ref. 1; AAF24761." evidence="11" ref="1">
    <original>N</original>
    <variation>D</variation>
    <location>
        <position position="844"/>
    </location>
</feature>
<feature type="sequence conflict" description="In Ref. 1; AAF24761." evidence="11" ref="1">
    <original>S</original>
    <variation>C</variation>
    <location>
        <position position="873"/>
    </location>
</feature>
<feature type="sequence conflict" description="In Ref. 1; AAF24761." evidence="11" ref="1">
    <original>T</original>
    <variation>A</variation>
    <location>
        <position position="903"/>
    </location>
</feature>
<feature type="sequence conflict" description="In Ref. 1; AAF24761." evidence="11" ref="1">
    <original>E</original>
    <variation>D</variation>
    <location>
        <position position="1061"/>
    </location>
</feature>
<feature type="sequence conflict" description="In Ref. 5; BAD32240." evidence="11" ref="5">
    <original>K</original>
    <variation>E</variation>
    <location>
        <position position="1136"/>
    </location>
</feature>
<feature type="sequence conflict" description="In Ref. 1; AAF24761." evidence="11" ref="1">
    <original>S</original>
    <variation>ST</variation>
    <location>
        <position position="1191"/>
    </location>
</feature>
<feature type="sequence conflict" description="In Ref. 1; AAF24761." evidence="11" ref="1">
    <original>P</original>
    <variation>L</variation>
    <location>
        <position position="1593"/>
    </location>
</feature>
<feature type="sequence conflict" description="In Ref. 1; AAF24761." evidence="11" ref="1">
    <original>LLH</original>
    <variation>FDVG</variation>
    <location>
        <begin position="1753"/>
        <end position="1755"/>
    </location>
</feature>
<feature type="sequence conflict" description="In Ref. 1; AAF24761." evidence="11" ref="1">
    <original>L</original>
    <variation>F</variation>
    <location>
        <position position="1763"/>
    </location>
</feature>
<feature type="sequence conflict" description="In Ref. 1; AAF24761." evidence="11" ref="1">
    <original>S</original>
    <variation>P</variation>
    <location>
        <position position="1826"/>
    </location>
</feature>
<feature type="sequence conflict" description="In Ref. 1; AAF24761." evidence="11" ref="1">
    <original>F</original>
    <variation>L</variation>
    <location>
        <position position="1845"/>
    </location>
</feature>
<feature type="sequence conflict" description="In Ref. 1; AAF24761." evidence="11" ref="1">
    <original>V</original>
    <variation>A</variation>
    <location>
        <position position="2033"/>
    </location>
</feature>
<feature type="sequence conflict" description="In Ref. 1; AAF24761." evidence="11" ref="1">
    <original>M</original>
    <variation>I</variation>
    <location>
        <position position="2043"/>
    </location>
</feature>
<feature type="sequence conflict" description="In Ref. 1; AAF24761." evidence="11" ref="1">
    <original>C</original>
    <variation>G</variation>
    <location>
        <position position="2478"/>
    </location>
</feature>
<feature type="sequence conflict" description="In Ref. 1; AAF24761." evidence="11" ref="1">
    <original>RAF</original>
    <variation>ARLI</variation>
    <location>
        <begin position="2800"/>
        <end position="2802"/>
    </location>
</feature>
<feature type="sequence conflict" description="In Ref. 1; AAF24761." evidence="11" ref="1">
    <original>G</original>
    <variation>V</variation>
    <location>
        <position position="2809"/>
    </location>
</feature>
<feature type="sequence conflict" description="In Ref. 1; AAF24761." evidence="11" ref="1">
    <original>F</original>
    <variation>Y</variation>
    <location>
        <position position="2814"/>
    </location>
</feature>
<feature type="sequence conflict" description="In Ref. 1; AAF24761." evidence="11" ref="1">
    <original>LGA</original>
    <variation>MGT</variation>
    <location>
        <begin position="2819"/>
        <end position="2821"/>
    </location>
</feature>
<feature type="sequence conflict" description="In Ref. 1; AAF24761." evidence="11" ref="1">
    <original>Q</original>
    <variation>L</variation>
    <location>
        <position position="2830"/>
    </location>
</feature>
<feature type="sequence conflict" description="In Ref. 1; AAF24761." evidence="11" ref="1">
    <original>S</original>
    <variation>T</variation>
    <location>
        <position position="2835"/>
    </location>
</feature>
<feature type="sequence conflict" description="In Ref. 1; AAF24761." evidence="11" ref="1">
    <original>EK</original>
    <variation>VR</variation>
    <location>
        <begin position="2852"/>
        <end position="2853"/>
    </location>
</feature>
<feature type="sequence conflict" description="In Ref. 1; AAF24761." evidence="11" ref="1">
    <original>L</original>
    <variation>H</variation>
    <location>
        <position position="2865"/>
    </location>
</feature>
<feature type="sequence conflict" description="In Ref. 1; AAF24761." evidence="11" ref="1">
    <original>L</original>
    <variation>R</variation>
    <location>
        <position position="2877"/>
    </location>
</feature>
<feature type="sequence conflict" description="In Ref. 1; AAF24761." evidence="11" ref="1">
    <original>A</original>
    <variation>T</variation>
    <location>
        <position position="2928"/>
    </location>
</feature>
<feature type="sequence conflict" description="In Ref. 1; AAF24761." evidence="11" ref="1">
    <original>A</original>
    <variation>T</variation>
    <location>
        <position position="2969"/>
    </location>
</feature>
<feature type="sequence conflict" description="In Ref. 1; AAF24761." evidence="11" ref="1">
    <original>I</original>
    <variation>S</variation>
    <location>
        <position position="2971"/>
    </location>
</feature>
<feature type="sequence conflict" description="In Ref. 1; AAF24761." evidence="11" ref="1">
    <original>S</original>
    <variation>L</variation>
    <location>
        <position position="2998"/>
    </location>
</feature>
<name>MGAP_MOUSE</name>
<protein>
    <recommendedName>
        <fullName>MAX gene-associated protein</fullName>
    </recommendedName>
</protein>
<keyword id="KW-0025">Alternative splicing</keyword>
<keyword id="KW-0175">Coiled coil</keyword>
<keyword id="KW-0238">DNA-binding</keyword>
<keyword id="KW-1017">Isopeptide bond</keyword>
<keyword id="KW-0488">Methylation</keyword>
<keyword id="KW-0539">Nucleus</keyword>
<keyword id="KW-0597">Phosphoprotein</keyword>
<keyword id="KW-1185">Reference proteome</keyword>
<keyword id="KW-0678">Repressor</keyword>
<keyword id="KW-0804">Transcription</keyword>
<keyword id="KW-0805">Transcription regulation</keyword>
<keyword id="KW-0832">Ubl conjugation</keyword>